<gene>
    <name type="primary">CECB1</name>
</gene>
<gene>
    <name type="primary">CECB2</name>
</gene>
<protein>
    <recommendedName>
        <fullName>Cecropin-B</fullName>
    </recommendedName>
    <alternativeName>
        <fullName>Lepidopteran-A/B</fullName>
    </alternativeName>
</protein>
<evidence type="ECO:0000255" key="1"/>
<evidence type="ECO:0000269" key="2">
    <source>
    </source>
</evidence>
<evidence type="ECO:0000269" key="3">
    <source>
    </source>
</evidence>
<evidence type="ECO:0000269" key="4">
    <source>
    </source>
</evidence>
<evidence type="ECO:0000269" key="5">
    <source ref="5"/>
</evidence>
<evidence type="ECO:0000305" key="6"/>
<proteinExistence type="evidence at protein level"/>
<sequence>MNFAKILSFVFALVLALSMTSAAPEPRWKIFKKIEKMGRNIRDGIVKAGPAIEVLGSAKAIGK</sequence>
<keyword id="KW-0027">Amidation</keyword>
<keyword id="KW-0044">Antibiotic</keyword>
<keyword id="KW-0929">Antimicrobial</keyword>
<keyword id="KW-0903">Direct protein sequencing</keyword>
<keyword id="KW-0379">Hydroxylation</keyword>
<keyword id="KW-0391">Immunity</keyword>
<keyword id="KW-0399">Innate immunity</keyword>
<keyword id="KW-1185">Reference proteome</keyword>
<keyword id="KW-0964">Secreted</keyword>
<keyword id="KW-0732">Signal</keyword>
<name>CECB_BOMMO</name>
<organism>
    <name type="scientific">Bombyx mori</name>
    <name type="common">Silk moth</name>
    <dbReference type="NCBI Taxonomy" id="7091"/>
    <lineage>
        <taxon>Eukaryota</taxon>
        <taxon>Metazoa</taxon>
        <taxon>Ecdysozoa</taxon>
        <taxon>Arthropoda</taxon>
        <taxon>Hexapoda</taxon>
        <taxon>Insecta</taxon>
        <taxon>Pterygota</taxon>
        <taxon>Neoptera</taxon>
        <taxon>Endopterygota</taxon>
        <taxon>Lepidoptera</taxon>
        <taxon>Glossata</taxon>
        <taxon>Ditrysia</taxon>
        <taxon>Bombycoidea</taxon>
        <taxon>Bombycidae</taxon>
        <taxon>Bombycinae</taxon>
        <taxon>Bombyx</taxon>
    </lineage>
</organism>
<dbReference type="EMBL" id="D25320">
    <property type="protein sequence ID" value="BAA04990.1"/>
    <property type="molecule type" value="Genomic_DNA"/>
</dbReference>
<dbReference type="EMBL" id="D25321">
    <property type="protein sequence ID" value="BAA04991.1"/>
    <property type="molecule type" value="Genomic_DNA"/>
</dbReference>
<dbReference type="EMBL" id="D11114">
    <property type="protein sequence ID" value="BAA01890.1"/>
    <property type="molecule type" value="mRNA"/>
</dbReference>
<dbReference type="EMBL" id="D11113">
    <property type="protein sequence ID" value="BAA01889.1"/>
    <property type="molecule type" value="mRNA"/>
</dbReference>
<dbReference type="EMBL" id="S60579">
    <property type="protein sequence ID" value="AAC60501.1"/>
    <property type="molecule type" value="mRNA"/>
</dbReference>
<dbReference type="EMBL" id="S74297">
    <property type="protein sequence ID" value="AAC60514.1"/>
    <property type="molecule type" value="mRNA"/>
</dbReference>
<dbReference type="PIR" id="JC2296">
    <property type="entry name" value="CKMTB"/>
</dbReference>
<dbReference type="RefSeq" id="NP_001037032.1">
    <property type="nucleotide sequence ID" value="NM_001043567.1"/>
</dbReference>
<dbReference type="RefSeq" id="NP_001037460.1">
    <property type="nucleotide sequence ID" value="NM_001043995.1"/>
</dbReference>
<dbReference type="RefSeq" id="NP_001096031.1">
    <property type="nucleotide sequence ID" value="NM_001102561.1"/>
</dbReference>
<dbReference type="RefSeq" id="XP_004926103.1">
    <property type="nucleotide sequence ID" value="XM_004926046.2"/>
</dbReference>
<dbReference type="RefSeq" id="XP_012545761.1">
    <property type="nucleotide sequence ID" value="XM_012690307.1"/>
</dbReference>
<dbReference type="RefSeq" id="XP_062532230.1">
    <property type="nucleotide sequence ID" value="XM_062676246.1"/>
</dbReference>
<dbReference type="SMR" id="P04142"/>
<dbReference type="STRING" id="7091.P04142"/>
<dbReference type="PaxDb" id="7091-BGIBMGA000021-TA"/>
<dbReference type="EnsemblMetazoa" id="NM_001043567.2">
    <property type="protein sequence ID" value="NP_001037032.2"/>
    <property type="gene ID" value="LOC101739536"/>
</dbReference>
<dbReference type="EnsemblMetazoa" id="NM_001043995.1">
    <property type="protein sequence ID" value="NP_001037460.1"/>
    <property type="gene ID" value="GeneID_693028"/>
</dbReference>
<dbReference type="EnsemblMetazoa" id="NM_001102561.1">
    <property type="protein sequence ID" value="NP_001096031.1"/>
    <property type="gene ID" value="GeneID_732858"/>
</dbReference>
<dbReference type="EnsemblMetazoa" id="XM_004926047.3">
    <property type="protein sequence ID" value="XP_004926104.1"/>
    <property type="gene ID" value="LOC101739681"/>
</dbReference>
<dbReference type="EnsemblMetazoa" id="XM_004926049.4">
    <property type="protein sequence ID" value="XP_004926106.1"/>
    <property type="gene ID" value="LOC101739958"/>
</dbReference>
<dbReference type="EnsemblMetazoa" id="XM_004926050.4">
    <property type="protein sequence ID" value="XP_004926107.1"/>
    <property type="gene ID" value="LOC101740092"/>
</dbReference>
<dbReference type="EnsemblMetazoa" id="XM_038020535.1">
    <property type="protein sequence ID" value="XP_037876463.1"/>
    <property type="gene ID" value="GeneID_693028"/>
</dbReference>
<dbReference type="GeneID" id="693028"/>
<dbReference type="GeneID" id="732858"/>
<dbReference type="KEGG" id="bmor:101739536"/>
<dbReference type="KEGG" id="bmor:101739681"/>
<dbReference type="KEGG" id="bmor:101739958"/>
<dbReference type="KEGG" id="bmor:101740092"/>
<dbReference type="KEGG" id="bmor:693028"/>
<dbReference type="KEGG" id="bmor:732858"/>
<dbReference type="CTD" id="693028"/>
<dbReference type="eggNOG" id="ENOG502T7RS">
    <property type="taxonomic scope" value="Eukaryota"/>
</dbReference>
<dbReference type="HOGENOM" id="CLU_187909_0_0_1"/>
<dbReference type="InParanoid" id="P04142"/>
<dbReference type="OMA" id="SPKWKIF"/>
<dbReference type="OrthoDB" id="579704at7088"/>
<dbReference type="Proteomes" id="UP000005204">
    <property type="component" value="Unassembled WGS sequence"/>
</dbReference>
<dbReference type="GO" id="GO:0005576">
    <property type="term" value="C:extracellular region"/>
    <property type="evidence" value="ECO:0007669"/>
    <property type="project" value="UniProtKB-SubCell"/>
</dbReference>
<dbReference type="GO" id="GO:0019731">
    <property type="term" value="P:antibacterial humoral response"/>
    <property type="evidence" value="ECO:0007669"/>
    <property type="project" value="InterPro"/>
</dbReference>
<dbReference type="GO" id="GO:0050830">
    <property type="term" value="P:defense response to Gram-positive bacterium"/>
    <property type="evidence" value="ECO:0007669"/>
    <property type="project" value="UniProtKB-ARBA"/>
</dbReference>
<dbReference type="GO" id="GO:0045087">
    <property type="term" value="P:innate immune response"/>
    <property type="evidence" value="ECO:0007669"/>
    <property type="project" value="UniProtKB-KW"/>
</dbReference>
<dbReference type="InterPro" id="IPR000875">
    <property type="entry name" value="Cecropin"/>
</dbReference>
<dbReference type="Pfam" id="PF00272">
    <property type="entry name" value="Cecropin"/>
    <property type="match status" value="1"/>
</dbReference>
<dbReference type="PROSITE" id="PS00268">
    <property type="entry name" value="CECROPIN"/>
    <property type="match status" value="1"/>
</dbReference>
<comment type="function">
    <text>Cecropins have lytic and antibacterial activity against several Gram-positive and Gram-negative bacteria.</text>
</comment>
<comment type="subcellular location">
    <subcellularLocation>
        <location>Secreted</location>
    </subcellularLocation>
</comment>
<comment type="tissue specificity">
    <text>Highest expression in fat body and hemocytes. Is also expressed in Malpighian tubules and to a much lesser extent in midgut. Not present in silk gland.</text>
</comment>
<comment type="PTM">
    <text evidence="2">Lepidopteran-B differs from lepidopteran-A by its hydroxylated residue.</text>
</comment>
<comment type="similarity">
    <text evidence="6">Belongs to the cecropin family.</text>
</comment>
<reference key="1">
    <citation type="journal article" date="1995" name="Gene">
        <title>Structure of two cecropin B-encoding genes and bacteria-inducible DNA-binding proteins which bind to the 5'-upstream regulatory region in the silkworm, Bombyx mori.</title>
        <authorList>
            <person name="Taniai K."/>
            <person name="Kadono-Okuda K."/>
            <person name="Kato Y."/>
            <person name="Yamamoto M."/>
            <person name="Shimabukuro M."/>
            <person name="Chowdhury S."/>
            <person name="Xu J."/>
            <person name="Kotani E."/>
            <person name="Tomino S."/>
            <person name="Yamakawa M."/>
        </authorList>
    </citation>
    <scope>NUCLEOTIDE SEQUENCE [GENOMIC DNA]</scope>
    <source>
        <strain>Tokai X Asahi</strain>
    </source>
</reference>
<reference key="2">
    <citation type="journal article" date="1992" name="Biochim. Biophys. Acta">
        <title>Isolation and nucleotide sequence of cecropin B cDNA clones from the silkworm, Bombyx mori.</title>
        <authorList>
            <person name="Taniai K."/>
            <person name="Kato Y."/>
            <person name="Hirochika H."/>
            <person name="Yamakawa M."/>
        </authorList>
    </citation>
    <scope>NUCLEOTIDE SEQUENCE [MRNA]</scope>
</reference>
<reference key="3">
    <citation type="journal article" date="1993" name="Insect Biochem. Mol. Biol.">
        <title>Expression and characterization of cDNAs for cecropin B, an antibacterial protein of the silkworm, Bombyx mori.</title>
        <authorList>
            <person name="Kato Y."/>
            <person name="Taniai K."/>
            <person name="Hirochika H."/>
            <person name="Yamakawa M."/>
        </authorList>
    </citation>
    <scope>NUCLEOTIDE SEQUENCE</scope>
</reference>
<reference key="4">
    <citation type="journal article" date="1994" name="Biosci. Biotechnol. Biochem.">
        <title>Cloning of cDNAs for cecropins A and B, and expression of the genes in the silkworm, Bombyx mori.</title>
        <authorList>
            <person name="Yamano Y."/>
            <person name="Matsumoto M."/>
            <person name="Inoue K."/>
            <person name="Kawabata T."/>
            <person name="Morishima I."/>
        </authorList>
    </citation>
    <scope>NUCLEOTIDE SEQUENCE</scope>
    <source>
        <strain>C108</strain>
        <tissue>Larval fat body</tissue>
    </source>
</reference>
<reference key="5">
    <citation type="journal article" date="1986" name="Tetrahedron">
        <title>Structure determination of lepidopteran, self-defense substance produced by silkworm.</title>
        <authorList>
            <person name="Teshima T."/>
            <person name="Ueki Y."/>
            <person name="Nakai T."/>
            <person name="Shiba T."/>
        </authorList>
    </citation>
    <scope>PROTEIN SEQUENCE OF 27-61</scope>
</reference>
<reference key="6">
    <citation type="journal article" date="1990" name="Comp. Biochem. Physiol.">
        <title>Isolation and structure of cecropins, inducible antibacterial peptides, from the silkworm, Bombyx mori.</title>
        <authorList>
            <person name="Morishima I."/>
            <person name="Suginaka S."/>
            <person name="Ueno T."/>
            <person name="Hirano H."/>
        </authorList>
    </citation>
    <scope>PROTEIN SEQUENCE OF 27-61</scope>
    <scope>HYDROXYLATION AT LYS-47</scope>
</reference>
<reference key="7">
    <citation type="journal article" date="1994" name="Anal. Biochem.">
        <title>Isolation and identification of cecropin antibacterial peptides from the extracellular matrix of the insect integument.</title>
        <authorList>
            <person name="Lee W.-J."/>
            <person name="Brey P.T."/>
        </authorList>
    </citation>
    <scope>PROTEIN SEQUENCE OF 27-61</scope>
    <scope>AMIDATION AT ILE-61</scope>
    <source>
        <tissue>Cuticle</tissue>
    </source>
</reference>
<feature type="signal peptide" evidence="1">
    <location>
        <begin position="1"/>
        <end position="22"/>
    </location>
</feature>
<feature type="propeptide" id="PRO_0000004826" description="Removed by a dipeptidylpeptidase" evidence="2 4 5">
    <location>
        <begin position="23"/>
        <end position="26"/>
    </location>
</feature>
<feature type="chain" id="PRO_0000004827" description="Cecropin-B" evidence="3">
    <location>
        <begin position="27"/>
        <end position="61"/>
    </location>
</feature>
<feature type="modified residue" description="5-hydroxylysine; partial" evidence="2">
    <location>
        <position position="47"/>
    </location>
</feature>
<feature type="modified residue" description="Isoleucine amide" evidence="4">
    <location>
        <position position="61"/>
    </location>
</feature>
<accession>P04142</accession>